<keyword id="KW-0414">Isoprene biosynthesis</keyword>
<keyword id="KW-0464">Manganese</keyword>
<keyword id="KW-0479">Metal-binding</keyword>
<keyword id="KW-0521">NADP</keyword>
<keyword id="KW-0560">Oxidoreductase</keyword>
<protein>
    <recommendedName>
        <fullName evidence="1">1-deoxy-D-xylulose 5-phosphate reductoisomerase</fullName>
        <shortName evidence="1">DXP reductoisomerase</shortName>
        <ecNumber evidence="1">1.1.1.267</ecNumber>
    </recommendedName>
    <alternativeName>
        <fullName evidence="1">1-deoxyxylulose-5-phosphate reductoisomerase</fullName>
    </alternativeName>
    <alternativeName>
        <fullName evidence="1">2-C-methyl-D-erythritol 4-phosphate synthase</fullName>
    </alternativeName>
</protein>
<organism>
    <name type="scientific">Burkholderia pseudomallei (strain 1106a)</name>
    <dbReference type="NCBI Taxonomy" id="357348"/>
    <lineage>
        <taxon>Bacteria</taxon>
        <taxon>Pseudomonadati</taxon>
        <taxon>Pseudomonadota</taxon>
        <taxon>Betaproteobacteria</taxon>
        <taxon>Burkholderiales</taxon>
        <taxon>Burkholderiaceae</taxon>
        <taxon>Burkholderia</taxon>
        <taxon>pseudomallei group</taxon>
    </lineage>
</organism>
<accession>A3NWM5</accession>
<name>DXR_BURP0</name>
<gene>
    <name evidence="1" type="primary">dxr</name>
    <name type="ordered locus">BURPS1106A_2487</name>
</gene>
<comment type="function">
    <text evidence="1">Catalyzes the NADPH-dependent rearrangement and reduction of 1-deoxy-D-xylulose-5-phosphate (DXP) to 2-C-methyl-D-erythritol 4-phosphate (MEP).</text>
</comment>
<comment type="catalytic activity">
    <reaction evidence="1">
        <text>2-C-methyl-D-erythritol 4-phosphate + NADP(+) = 1-deoxy-D-xylulose 5-phosphate + NADPH + H(+)</text>
        <dbReference type="Rhea" id="RHEA:13717"/>
        <dbReference type="ChEBI" id="CHEBI:15378"/>
        <dbReference type="ChEBI" id="CHEBI:57783"/>
        <dbReference type="ChEBI" id="CHEBI:57792"/>
        <dbReference type="ChEBI" id="CHEBI:58262"/>
        <dbReference type="ChEBI" id="CHEBI:58349"/>
        <dbReference type="EC" id="1.1.1.267"/>
    </reaction>
    <physiologicalReaction direction="right-to-left" evidence="1">
        <dbReference type="Rhea" id="RHEA:13719"/>
    </physiologicalReaction>
</comment>
<comment type="cofactor">
    <cofactor evidence="1">
        <name>Mg(2+)</name>
        <dbReference type="ChEBI" id="CHEBI:18420"/>
    </cofactor>
    <cofactor evidence="1">
        <name>Mn(2+)</name>
        <dbReference type="ChEBI" id="CHEBI:29035"/>
    </cofactor>
</comment>
<comment type="pathway">
    <text evidence="1">Isoprenoid biosynthesis; isopentenyl diphosphate biosynthesis via DXP pathway; isopentenyl diphosphate from 1-deoxy-D-xylulose 5-phosphate: step 1/6.</text>
</comment>
<comment type="similarity">
    <text evidence="1">Belongs to the DXR family.</text>
</comment>
<reference key="1">
    <citation type="journal article" date="2010" name="Genome Biol. Evol.">
        <title>Continuing evolution of Burkholderia mallei through genome reduction and large-scale rearrangements.</title>
        <authorList>
            <person name="Losada L."/>
            <person name="Ronning C.M."/>
            <person name="DeShazer D."/>
            <person name="Woods D."/>
            <person name="Fedorova N."/>
            <person name="Kim H.S."/>
            <person name="Shabalina S.A."/>
            <person name="Pearson T.R."/>
            <person name="Brinkac L."/>
            <person name="Tan P."/>
            <person name="Nandi T."/>
            <person name="Crabtree J."/>
            <person name="Badger J."/>
            <person name="Beckstrom-Sternberg S."/>
            <person name="Saqib M."/>
            <person name="Schutzer S.E."/>
            <person name="Keim P."/>
            <person name="Nierman W.C."/>
        </authorList>
    </citation>
    <scope>NUCLEOTIDE SEQUENCE [LARGE SCALE GENOMIC DNA]</scope>
    <source>
        <strain>1106a</strain>
    </source>
</reference>
<evidence type="ECO:0000255" key="1">
    <source>
        <dbReference type="HAMAP-Rule" id="MF_00183"/>
    </source>
</evidence>
<feature type="chain" id="PRO_1000020229" description="1-deoxy-D-xylulose 5-phosphate reductoisomerase">
    <location>
        <begin position="1"/>
        <end position="398"/>
    </location>
</feature>
<feature type="binding site" evidence="1">
    <location>
        <position position="11"/>
    </location>
    <ligand>
        <name>NADPH</name>
        <dbReference type="ChEBI" id="CHEBI:57783"/>
    </ligand>
</feature>
<feature type="binding site" evidence="1">
    <location>
        <position position="12"/>
    </location>
    <ligand>
        <name>NADPH</name>
        <dbReference type="ChEBI" id="CHEBI:57783"/>
    </ligand>
</feature>
<feature type="binding site" evidence="1">
    <location>
        <position position="13"/>
    </location>
    <ligand>
        <name>NADPH</name>
        <dbReference type="ChEBI" id="CHEBI:57783"/>
    </ligand>
</feature>
<feature type="binding site" evidence="1">
    <location>
        <position position="14"/>
    </location>
    <ligand>
        <name>NADPH</name>
        <dbReference type="ChEBI" id="CHEBI:57783"/>
    </ligand>
</feature>
<feature type="binding site" evidence="1">
    <location>
        <position position="38"/>
    </location>
    <ligand>
        <name>NADPH</name>
        <dbReference type="ChEBI" id="CHEBI:57783"/>
    </ligand>
</feature>
<feature type="binding site" evidence="1">
    <location>
        <position position="39"/>
    </location>
    <ligand>
        <name>NADPH</name>
        <dbReference type="ChEBI" id="CHEBI:57783"/>
    </ligand>
</feature>
<feature type="binding site" evidence="1">
    <location>
        <position position="125"/>
    </location>
    <ligand>
        <name>NADPH</name>
        <dbReference type="ChEBI" id="CHEBI:57783"/>
    </ligand>
</feature>
<feature type="binding site" evidence="1">
    <location>
        <position position="126"/>
    </location>
    <ligand>
        <name>1-deoxy-D-xylulose 5-phosphate</name>
        <dbReference type="ChEBI" id="CHEBI:57792"/>
    </ligand>
</feature>
<feature type="binding site" evidence="1">
    <location>
        <position position="127"/>
    </location>
    <ligand>
        <name>NADPH</name>
        <dbReference type="ChEBI" id="CHEBI:57783"/>
    </ligand>
</feature>
<feature type="binding site" evidence="1">
    <location>
        <position position="151"/>
    </location>
    <ligand>
        <name>Mn(2+)</name>
        <dbReference type="ChEBI" id="CHEBI:29035"/>
    </ligand>
</feature>
<feature type="binding site" evidence="1">
    <location>
        <position position="152"/>
    </location>
    <ligand>
        <name>1-deoxy-D-xylulose 5-phosphate</name>
        <dbReference type="ChEBI" id="CHEBI:57792"/>
    </ligand>
</feature>
<feature type="binding site" evidence="1">
    <location>
        <position position="153"/>
    </location>
    <ligand>
        <name>1-deoxy-D-xylulose 5-phosphate</name>
        <dbReference type="ChEBI" id="CHEBI:57792"/>
    </ligand>
</feature>
<feature type="binding site" evidence="1">
    <location>
        <position position="153"/>
    </location>
    <ligand>
        <name>Mn(2+)</name>
        <dbReference type="ChEBI" id="CHEBI:29035"/>
    </ligand>
</feature>
<feature type="binding site" evidence="1">
    <location>
        <position position="179"/>
    </location>
    <ligand>
        <name>1-deoxy-D-xylulose 5-phosphate</name>
        <dbReference type="ChEBI" id="CHEBI:57792"/>
    </ligand>
</feature>
<feature type="binding site" evidence="1">
    <location>
        <position position="202"/>
    </location>
    <ligand>
        <name>1-deoxy-D-xylulose 5-phosphate</name>
        <dbReference type="ChEBI" id="CHEBI:57792"/>
    </ligand>
</feature>
<feature type="binding site" evidence="1">
    <location>
        <position position="208"/>
    </location>
    <ligand>
        <name>NADPH</name>
        <dbReference type="ChEBI" id="CHEBI:57783"/>
    </ligand>
</feature>
<feature type="binding site" evidence="1">
    <location>
        <position position="215"/>
    </location>
    <ligand>
        <name>1-deoxy-D-xylulose 5-phosphate</name>
        <dbReference type="ChEBI" id="CHEBI:57792"/>
    </ligand>
</feature>
<feature type="binding site" evidence="1">
    <location>
        <position position="220"/>
    </location>
    <ligand>
        <name>1-deoxy-D-xylulose 5-phosphate</name>
        <dbReference type="ChEBI" id="CHEBI:57792"/>
    </ligand>
</feature>
<feature type="binding site" evidence="1">
    <location>
        <position position="221"/>
    </location>
    <ligand>
        <name>1-deoxy-D-xylulose 5-phosphate</name>
        <dbReference type="ChEBI" id="CHEBI:57792"/>
    </ligand>
</feature>
<feature type="binding site" evidence="1">
    <location>
        <position position="224"/>
    </location>
    <ligand>
        <name>1-deoxy-D-xylulose 5-phosphate</name>
        <dbReference type="ChEBI" id="CHEBI:57792"/>
    </ligand>
</feature>
<feature type="binding site" evidence="1">
    <location>
        <position position="224"/>
    </location>
    <ligand>
        <name>Mn(2+)</name>
        <dbReference type="ChEBI" id="CHEBI:29035"/>
    </ligand>
</feature>
<sequence length="398" mass="41641">MQKRLTLLGSTGSIGDSTLDVVARHPERFAVHALTAHRNGEKLVAQCLRFAPDVAVVGDAETAARVEAQLRAAGSRTQVAYGKQALVDVSKSDGCDTVVAAIVGAAGLAPSLAAARAGKRILLANKEALVMSGAIFMDAVRDHGAILLPVDSEHNAIFQCMPRDAAEHGGIAKIIVTASGGPFRTREPATLASVTPDEACKHPNWVMGRKISVDSATMMNKGLEVIEAHWLFGLPSERIDVLIHPQSVIHSLVSYRDGSVLAQLGNPDMRTPIAHALAFPERVDAGVAQLDLAQIATLTFEKPDYARFPCLALAIDALEAGGVASAALNAANEIAVDAFLSRRIRFTAIAQTVGAVLDGLSNRTPGGLDDVIEADAAARRAATAFIGKLPAPGVERAA</sequence>
<dbReference type="EC" id="1.1.1.267" evidence="1"/>
<dbReference type="EMBL" id="CP000572">
    <property type="protein sequence ID" value="ABN92147.1"/>
    <property type="molecule type" value="Genomic_DNA"/>
</dbReference>
<dbReference type="RefSeq" id="WP_004527290.1">
    <property type="nucleotide sequence ID" value="NC_009076.1"/>
</dbReference>
<dbReference type="SMR" id="A3NWM5"/>
<dbReference type="KEGG" id="bpl:BURPS1106A_2487"/>
<dbReference type="HOGENOM" id="CLU_035714_4_0_4"/>
<dbReference type="UniPathway" id="UPA00056">
    <property type="reaction ID" value="UER00092"/>
</dbReference>
<dbReference type="Proteomes" id="UP000006738">
    <property type="component" value="Chromosome I"/>
</dbReference>
<dbReference type="GO" id="GO:0030604">
    <property type="term" value="F:1-deoxy-D-xylulose-5-phosphate reductoisomerase activity"/>
    <property type="evidence" value="ECO:0007669"/>
    <property type="project" value="UniProtKB-UniRule"/>
</dbReference>
<dbReference type="GO" id="GO:0030145">
    <property type="term" value="F:manganese ion binding"/>
    <property type="evidence" value="ECO:0007669"/>
    <property type="project" value="TreeGrafter"/>
</dbReference>
<dbReference type="GO" id="GO:0070402">
    <property type="term" value="F:NADPH binding"/>
    <property type="evidence" value="ECO:0007669"/>
    <property type="project" value="InterPro"/>
</dbReference>
<dbReference type="GO" id="GO:0051484">
    <property type="term" value="P:isopentenyl diphosphate biosynthetic process, methylerythritol 4-phosphate pathway involved in terpenoid biosynthetic process"/>
    <property type="evidence" value="ECO:0007669"/>
    <property type="project" value="TreeGrafter"/>
</dbReference>
<dbReference type="FunFam" id="1.10.1740.10:FF:000004">
    <property type="entry name" value="1-deoxy-D-xylulose 5-phosphate reductoisomerase"/>
    <property type="match status" value="1"/>
</dbReference>
<dbReference type="FunFam" id="3.40.50.720:FF:000045">
    <property type="entry name" value="1-deoxy-D-xylulose 5-phosphate reductoisomerase"/>
    <property type="match status" value="1"/>
</dbReference>
<dbReference type="Gene3D" id="1.10.1740.10">
    <property type="match status" value="1"/>
</dbReference>
<dbReference type="Gene3D" id="3.40.50.720">
    <property type="entry name" value="NAD(P)-binding Rossmann-like Domain"/>
    <property type="match status" value="1"/>
</dbReference>
<dbReference type="HAMAP" id="MF_00183">
    <property type="entry name" value="DXP_reductoisom"/>
    <property type="match status" value="1"/>
</dbReference>
<dbReference type="InterPro" id="IPR003821">
    <property type="entry name" value="DXP_reductoisomerase"/>
</dbReference>
<dbReference type="InterPro" id="IPR013644">
    <property type="entry name" value="DXP_reductoisomerase_C"/>
</dbReference>
<dbReference type="InterPro" id="IPR013512">
    <property type="entry name" value="DXP_reductoisomerase_N"/>
</dbReference>
<dbReference type="InterPro" id="IPR026877">
    <property type="entry name" value="DXPR_C"/>
</dbReference>
<dbReference type="InterPro" id="IPR036169">
    <property type="entry name" value="DXPR_C_sf"/>
</dbReference>
<dbReference type="InterPro" id="IPR036291">
    <property type="entry name" value="NAD(P)-bd_dom_sf"/>
</dbReference>
<dbReference type="NCBIfam" id="TIGR00243">
    <property type="entry name" value="Dxr"/>
    <property type="match status" value="1"/>
</dbReference>
<dbReference type="NCBIfam" id="NF003938">
    <property type="entry name" value="PRK05447.1-1"/>
    <property type="match status" value="1"/>
</dbReference>
<dbReference type="NCBIfam" id="NF009114">
    <property type="entry name" value="PRK12464.1"/>
    <property type="match status" value="1"/>
</dbReference>
<dbReference type="PANTHER" id="PTHR30525">
    <property type="entry name" value="1-DEOXY-D-XYLULOSE 5-PHOSPHATE REDUCTOISOMERASE"/>
    <property type="match status" value="1"/>
</dbReference>
<dbReference type="PANTHER" id="PTHR30525:SF0">
    <property type="entry name" value="1-DEOXY-D-XYLULOSE 5-PHOSPHATE REDUCTOISOMERASE, CHLOROPLASTIC"/>
    <property type="match status" value="1"/>
</dbReference>
<dbReference type="Pfam" id="PF08436">
    <property type="entry name" value="DXP_redisom_C"/>
    <property type="match status" value="1"/>
</dbReference>
<dbReference type="Pfam" id="PF02670">
    <property type="entry name" value="DXP_reductoisom"/>
    <property type="match status" value="1"/>
</dbReference>
<dbReference type="Pfam" id="PF13288">
    <property type="entry name" value="DXPR_C"/>
    <property type="match status" value="1"/>
</dbReference>
<dbReference type="PIRSF" id="PIRSF006205">
    <property type="entry name" value="Dxp_reductismrs"/>
    <property type="match status" value="1"/>
</dbReference>
<dbReference type="SUPFAM" id="SSF69055">
    <property type="entry name" value="1-deoxy-D-xylulose-5-phosphate reductoisomerase, C-terminal domain"/>
    <property type="match status" value="1"/>
</dbReference>
<dbReference type="SUPFAM" id="SSF55347">
    <property type="entry name" value="Glyceraldehyde-3-phosphate dehydrogenase-like, C-terminal domain"/>
    <property type="match status" value="1"/>
</dbReference>
<dbReference type="SUPFAM" id="SSF51735">
    <property type="entry name" value="NAD(P)-binding Rossmann-fold domains"/>
    <property type="match status" value="1"/>
</dbReference>
<proteinExistence type="inferred from homology"/>